<dbReference type="EMBL" id="CM000129">
    <property type="protein sequence ID" value="EEC78284.1"/>
    <property type="molecule type" value="Genomic_DNA"/>
</dbReference>
<dbReference type="EMBL" id="CT844051">
    <property type="status" value="NOT_ANNOTATED_CDS"/>
    <property type="molecule type" value="mRNA"/>
</dbReference>
<dbReference type="SMR" id="B8ART0"/>
<dbReference type="STRING" id="39946.B8ART0"/>
<dbReference type="EnsemblPlants" id="BGIOSGA017380-TA">
    <property type="protein sequence ID" value="BGIOSGA017380-PA"/>
    <property type="gene ID" value="BGIOSGA017380"/>
</dbReference>
<dbReference type="EnsemblPlants" id="OsGoSa_04g0031080.01">
    <property type="protein sequence ID" value="OsGoSa_04g0031080.01"/>
    <property type="gene ID" value="OsGoSa_04g0031080"/>
</dbReference>
<dbReference type="EnsemblPlants" id="OsIR64_04g0030670.01">
    <property type="protein sequence ID" value="OsIR64_04g0030670.01"/>
    <property type="gene ID" value="OsIR64_04g0030670"/>
</dbReference>
<dbReference type="EnsemblPlants" id="OsKYG_04g0030940.01">
    <property type="protein sequence ID" value="OsKYG_04g0030940.01"/>
    <property type="gene ID" value="OsKYG_04g0030940"/>
</dbReference>
<dbReference type="EnsemblPlants" id="OsLaMu_04g0031640.01">
    <property type="protein sequence ID" value="OsLaMu_04g0031640.01"/>
    <property type="gene ID" value="OsLaMu_04g0031640"/>
</dbReference>
<dbReference type="EnsemblPlants" id="OsLima_04g0031150.01">
    <property type="protein sequence ID" value="OsLima_04g0031150.01"/>
    <property type="gene ID" value="OsLima_04g0031150"/>
</dbReference>
<dbReference type="EnsemblPlants" id="OsLiXu_04g0031640.01">
    <property type="protein sequence ID" value="OsLiXu_04g0031640.01"/>
    <property type="gene ID" value="OsLiXu_04g0031640"/>
</dbReference>
<dbReference type="EnsemblPlants" id="OsMH63_04G032050_01">
    <property type="protein sequence ID" value="OsMH63_04G032050_01"/>
    <property type="gene ID" value="OsMH63_04G032050"/>
</dbReference>
<dbReference type="EnsemblPlants" id="OsPr106_04g0032050.01">
    <property type="protein sequence ID" value="OsPr106_04g0032050.01"/>
    <property type="gene ID" value="OsPr106_04g0032050"/>
</dbReference>
<dbReference type="EnsemblPlants" id="OsZS97_04G032170_01">
    <property type="protein sequence ID" value="OsZS97_04G032170_01"/>
    <property type="gene ID" value="OsZS97_04G032170"/>
</dbReference>
<dbReference type="Gramene" id="BGIOSGA017380-TA">
    <property type="protein sequence ID" value="BGIOSGA017380-PA"/>
    <property type="gene ID" value="BGIOSGA017380"/>
</dbReference>
<dbReference type="Gramene" id="OsGoSa_04g0031080.01">
    <property type="protein sequence ID" value="OsGoSa_04g0031080.01"/>
    <property type="gene ID" value="OsGoSa_04g0031080"/>
</dbReference>
<dbReference type="Gramene" id="OsIR64_04g0030670.01">
    <property type="protein sequence ID" value="OsIR64_04g0030670.01"/>
    <property type="gene ID" value="OsIR64_04g0030670"/>
</dbReference>
<dbReference type="Gramene" id="OsKYG_04g0030940.01">
    <property type="protein sequence ID" value="OsKYG_04g0030940.01"/>
    <property type="gene ID" value="OsKYG_04g0030940"/>
</dbReference>
<dbReference type="Gramene" id="OsLaMu_04g0031640.01">
    <property type="protein sequence ID" value="OsLaMu_04g0031640.01"/>
    <property type="gene ID" value="OsLaMu_04g0031640"/>
</dbReference>
<dbReference type="Gramene" id="OsLima_04g0031150.01">
    <property type="protein sequence ID" value="OsLima_04g0031150.01"/>
    <property type="gene ID" value="OsLima_04g0031150"/>
</dbReference>
<dbReference type="Gramene" id="OsLiXu_04g0031640.01">
    <property type="protein sequence ID" value="OsLiXu_04g0031640.01"/>
    <property type="gene ID" value="OsLiXu_04g0031640"/>
</dbReference>
<dbReference type="Gramene" id="OsMH63_04G032050_01">
    <property type="protein sequence ID" value="OsMH63_04G032050_01"/>
    <property type="gene ID" value="OsMH63_04G032050"/>
</dbReference>
<dbReference type="Gramene" id="OsPr106_04g0032050.01">
    <property type="protein sequence ID" value="OsPr106_04g0032050.01"/>
    <property type="gene ID" value="OsPr106_04g0032050"/>
</dbReference>
<dbReference type="Gramene" id="OsZS97_04G032170_01">
    <property type="protein sequence ID" value="OsZS97_04G032170_01"/>
    <property type="gene ID" value="OsZS97_04G032170"/>
</dbReference>
<dbReference type="HOGENOM" id="CLU_066104_3_1_1"/>
<dbReference type="OMA" id="TSANWIA"/>
<dbReference type="OrthoDB" id="753675at2759"/>
<dbReference type="Proteomes" id="UP000007015">
    <property type="component" value="Chromosome 4"/>
</dbReference>
<dbReference type="GO" id="GO:0005886">
    <property type="term" value="C:plasma membrane"/>
    <property type="evidence" value="ECO:0007669"/>
    <property type="project" value="UniProtKB-SubCell"/>
</dbReference>
<dbReference type="GO" id="GO:0071555">
    <property type="term" value="P:cell wall organization"/>
    <property type="evidence" value="ECO:0007669"/>
    <property type="project" value="UniProtKB-KW"/>
</dbReference>
<dbReference type="InterPro" id="IPR006459">
    <property type="entry name" value="CASP/CASPL"/>
</dbReference>
<dbReference type="InterPro" id="IPR006702">
    <property type="entry name" value="CASP_dom"/>
</dbReference>
<dbReference type="InterPro" id="IPR044173">
    <property type="entry name" value="CASPL"/>
</dbReference>
<dbReference type="NCBIfam" id="TIGR01569">
    <property type="entry name" value="A_tha_TIGR01569"/>
    <property type="match status" value="1"/>
</dbReference>
<dbReference type="PANTHER" id="PTHR36488:SF11">
    <property type="entry name" value="CASP-LIKE PROTEIN"/>
    <property type="match status" value="1"/>
</dbReference>
<dbReference type="PANTHER" id="PTHR36488">
    <property type="entry name" value="CASP-LIKE PROTEIN 1U1"/>
    <property type="match status" value="1"/>
</dbReference>
<dbReference type="Pfam" id="PF04535">
    <property type="entry name" value="CASP_dom"/>
    <property type="match status" value="1"/>
</dbReference>
<comment type="function">
    <text evidence="1">Regulates membrane-cell wall junctions and localized cell wall deposition. Required for establishment of the Casparian strip membrane domain (CSD) and the subsequent formation of Casparian strips, a cell wall modification of the root endodermis that determines an apoplastic barrier between the intraorganismal apoplasm and the extraorganismal apoplasm and prevents lateral diffusion (By similarity).</text>
</comment>
<comment type="subunit">
    <text evidence="1">Homodimer and heterodimers.</text>
</comment>
<comment type="subcellular location">
    <subcellularLocation>
        <location evidence="1">Cell membrane</location>
        <topology evidence="1">Multi-pass membrane protein</topology>
    </subcellularLocation>
    <text evidence="1">Very restricted localization following a belt shape within the plasma membrane which coincides with the position of the Casparian strip membrane domain in the root endodermis.</text>
</comment>
<comment type="similarity">
    <text evidence="4">Belongs to the Casparian strip membrane proteins (CASP) family.</text>
</comment>
<proteinExistence type="evidence at transcript level"/>
<organism>
    <name type="scientific">Oryza sativa subsp. indica</name>
    <name type="common">Rice</name>
    <dbReference type="NCBI Taxonomy" id="39946"/>
    <lineage>
        <taxon>Eukaryota</taxon>
        <taxon>Viridiplantae</taxon>
        <taxon>Streptophyta</taxon>
        <taxon>Embryophyta</taxon>
        <taxon>Tracheophyta</taxon>
        <taxon>Spermatophyta</taxon>
        <taxon>Magnoliopsida</taxon>
        <taxon>Liliopsida</taxon>
        <taxon>Poales</taxon>
        <taxon>Poaceae</taxon>
        <taxon>BOP clade</taxon>
        <taxon>Oryzoideae</taxon>
        <taxon>Oryzeae</taxon>
        <taxon>Oryzinae</taxon>
        <taxon>Oryza</taxon>
        <taxon>Oryza sativa</taxon>
    </lineage>
</organism>
<gene>
    <name type="ORF">OsI_17983</name>
</gene>
<reference key="1">
    <citation type="journal article" date="2005" name="PLoS Biol.">
        <title>The genomes of Oryza sativa: a history of duplications.</title>
        <authorList>
            <person name="Yu J."/>
            <person name="Wang J."/>
            <person name="Lin W."/>
            <person name="Li S."/>
            <person name="Li H."/>
            <person name="Zhou J."/>
            <person name="Ni P."/>
            <person name="Dong W."/>
            <person name="Hu S."/>
            <person name="Zeng C."/>
            <person name="Zhang J."/>
            <person name="Zhang Y."/>
            <person name="Li R."/>
            <person name="Xu Z."/>
            <person name="Li S."/>
            <person name="Li X."/>
            <person name="Zheng H."/>
            <person name="Cong L."/>
            <person name="Lin L."/>
            <person name="Yin J."/>
            <person name="Geng J."/>
            <person name="Li G."/>
            <person name="Shi J."/>
            <person name="Liu J."/>
            <person name="Lv H."/>
            <person name="Li J."/>
            <person name="Wang J."/>
            <person name="Deng Y."/>
            <person name="Ran L."/>
            <person name="Shi X."/>
            <person name="Wang X."/>
            <person name="Wu Q."/>
            <person name="Li C."/>
            <person name="Ren X."/>
            <person name="Wang J."/>
            <person name="Wang X."/>
            <person name="Li D."/>
            <person name="Liu D."/>
            <person name="Zhang X."/>
            <person name="Ji Z."/>
            <person name="Zhao W."/>
            <person name="Sun Y."/>
            <person name="Zhang Z."/>
            <person name="Bao J."/>
            <person name="Han Y."/>
            <person name="Dong L."/>
            <person name="Ji J."/>
            <person name="Chen P."/>
            <person name="Wu S."/>
            <person name="Liu J."/>
            <person name="Xiao Y."/>
            <person name="Bu D."/>
            <person name="Tan J."/>
            <person name="Yang L."/>
            <person name="Ye C."/>
            <person name="Zhang J."/>
            <person name="Xu J."/>
            <person name="Zhou Y."/>
            <person name="Yu Y."/>
            <person name="Zhang B."/>
            <person name="Zhuang S."/>
            <person name="Wei H."/>
            <person name="Liu B."/>
            <person name="Lei M."/>
            <person name="Yu H."/>
            <person name="Li Y."/>
            <person name="Xu H."/>
            <person name="Wei S."/>
            <person name="He X."/>
            <person name="Fang L."/>
            <person name="Zhang Z."/>
            <person name="Zhang Y."/>
            <person name="Huang X."/>
            <person name="Su Z."/>
            <person name="Tong W."/>
            <person name="Li J."/>
            <person name="Tong Z."/>
            <person name="Li S."/>
            <person name="Ye J."/>
            <person name="Wang L."/>
            <person name="Fang L."/>
            <person name="Lei T."/>
            <person name="Chen C.-S."/>
            <person name="Chen H.-C."/>
            <person name="Xu Z."/>
            <person name="Li H."/>
            <person name="Huang H."/>
            <person name="Zhang F."/>
            <person name="Xu H."/>
            <person name="Li N."/>
            <person name="Zhao C."/>
            <person name="Li S."/>
            <person name="Dong L."/>
            <person name="Huang Y."/>
            <person name="Li L."/>
            <person name="Xi Y."/>
            <person name="Qi Q."/>
            <person name="Li W."/>
            <person name="Zhang B."/>
            <person name="Hu W."/>
            <person name="Zhang Y."/>
            <person name="Tian X."/>
            <person name="Jiao Y."/>
            <person name="Liang X."/>
            <person name="Jin J."/>
            <person name="Gao L."/>
            <person name="Zheng W."/>
            <person name="Hao B."/>
            <person name="Liu S.-M."/>
            <person name="Wang W."/>
            <person name="Yuan L."/>
            <person name="Cao M."/>
            <person name="McDermott J."/>
            <person name="Samudrala R."/>
            <person name="Wang J."/>
            <person name="Wong G.K.-S."/>
            <person name="Yang H."/>
        </authorList>
    </citation>
    <scope>NUCLEOTIDE SEQUENCE [LARGE SCALE GENOMIC DNA]</scope>
    <source>
        <strain>cv. 93-11</strain>
    </source>
</reference>
<reference key="2">
    <citation type="journal article" date="2007" name="Plant Mol. Biol.">
        <title>A collection of 10,096 indica rice full-length cDNAs reveals highly expressed sequence divergence between Oryza sativa indica and japonica subspecies.</title>
        <authorList>
            <person name="Liu X."/>
            <person name="Lu T."/>
            <person name="Yu S."/>
            <person name="Li Y."/>
            <person name="Huang Y."/>
            <person name="Huang T."/>
            <person name="Zhang L."/>
            <person name="Zhu J."/>
            <person name="Zhao Q."/>
            <person name="Fan D."/>
            <person name="Mu J."/>
            <person name="Shangguan Y."/>
            <person name="Feng Q."/>
            <person name="Guan J."/>
            <person name="Ying K."/>
            <person name="Zhang Y."/>
            <person name="Lin Z."/>
            <person name="Sun Z."/>
            <person name="Qian Q."/>
            <person name="Lu Y."/>
            <person name="Han B."/>
        </authorList>
    </citation>
    <scope>NUCLEOTIDE SEQUENCE [LARGE SCALE MRNA]</scope>
    <source>
        <strain>cv. Guang-Lu-Ai No.4</strain>
    </source>
</reference>
<reference key="3">
    <citation type="journal article" date="2014" name="Plant Physiol.">
        <title>Functional and evolutionary analysis of the CASPARIAN STRIP MEMBRANE DOMAIN PROTEIN family.</title>
        <authorList>
            <person name="Roppolo D."/>
            <person name="Boeckmann B."/>
            <person name="Pfister A."/>
            <person name="Boutet E."/>
            <person name="Rubio M.C."/>
            <person name="Denervaud-Tendon V."/>
            <person name="Vermeer J.E."/>
            <person name="Gheyselinck J."/>
            <person name="Xenarios I."/>
            <person name="Geldner N."/>
        </authorList>
    </citation>
    <scope>GENE FAMILY</scope>
    <scope>NOMENCLATURE</scope>
</reference>
<feature type="chain" id="PRO_0000412020" description="Casparian strip membrane protein 1">
    <location>
        <begin position="1"/>
        <end position="224"/>
    </location>
</feature>
<feature type="topological domain" description="Cytoplasmic" evidence="2">
    <location>
        <begin position="1"/>
        <end position="62"/>
    </location>
</feature>
<feature type="transmembrane region" description="Helical" evidence="2">
    <location>
        <begin position="63"/>
        <end position="83"/>
    </location>
</feature>
<feature type="topological domain" description="Extracellular" evidence="2">
    <location>
        <begin position="84"/>
        <end position="110"/>
    </location>
</feature>
<feature type="transmembrane region" description="Helical" evidence="2">
    <location>
        <begin position="111"/>
        <end position="131"/>
    </location>
</feature>
<feature type="topological domain" description="Cytoplasmic" evidence="2">
    <location>
        <begin position="132"/>
        <end position="145"/>
    </location>
</feature>
<feature type="transmembrane region" description="Helical" evidence="2">
    <location>
        <begin position="146"/>
        <end position="166"/>
    </location>
</feature>
<feature type="topological domain" description="Extracellular" evidence="2">
    <location>
        <begin position="167"/>
        <end position="200"/>
    </location>
</feature>
<feature type="transmembrane region" description="Helical" evidence="2">
    <location>
        <begin position="201"/>
        <end position="221"/>
    </location>
</feature>
<feature type="topological domain" description="Cytoplasmic" evidence="2">
    <location>
        <begin position="222"/>
        <end position="224"/>
    </location>
</feature>
<feature type="region of interest" description="Disordered" evidence="3">
    <location>
        <begin position="1"/>
        <end position="22"/>
    </location>
</feature>
<feature type="sequence conflict" description="In Ref. 2; CT844051." evidence="4" ref="2">
    <original>S</original>
    <variation>F</variation>
    <location>
        <position position="203"/>
    </location>
</feature>
<evidence type="ECO:0000250" key="1"/>
<evidence type="ECO:0000255" key="2"/>
<evidence type="ECO:0000256" key="3">
    <source>
        <dbReference type="SAM" id="MobiDB-lite"/>
    </source>
</evidence>
<evidence type="ECO:0000305" key="4"/>
<sequence>MSSGEPAAVSIPIHDHHGKAPATSSAVPAAAAAAPAAAPAVAPRKVGIPFFRRGDHHRGSRCLAFLDFILRIAAFGPALAAAISTGTSDETLSVFTEFYQFRARFDDFPAFLFFLVANAIVAGYLVLSLPFSAVLVIRPQTIGLRLLLLVCDMIMAAMLTAAASAAAAIVDLAHNGNLRANWVAICMQFHGFCQRTSGSVVASFLTVVILMFLVILAACSIRKR</sequence>
<protein>
    <recommendedName>
        <fullName>Casparian strip membrane protein 1</fullName>
        <shortName>OsCASP1</shortName>
    </recommendedName>
</protein>
<name>CASP1_ORYSI</name>
<keyword id="KW-1003">Cell membrane</keyword>
<keyword id="KW-0961">Cell wall biogenesis/degradation</keyword>
<keyword id="KW-0472">Membrane</keyword>
<keyword id="KW-1185">Reference proteome</keyword>
<keyword id="KW-0812">Transmembrane</keyword>
<keyword id="KW-1133">Transmembrane helix</keyword>
<accession>B8ART0</accession>